<organism>
    <name type="scientific">Escherichia coli (strain K12)</name>
    <dbReference type="NCBI Taxonomy" id="83333"/>
    <lineage>
        <taxon>Bacteria</taxon>
        <taxon>Pseudomonadati</taxon>
        <taxon>Pseudomonadota</taxon>
        <taxon>Gammaproteobacteria</taxon>
        <taxon>Enterobacterales</taxon>
        <taxon>Enterobacteriaceae</taxon>
        <taxon>Escherichia</taxon>
    </lineage>
</organism>
<accession>P0A6P5</accession>
<accession>P77254</accession>
<accession>Q8X4Y1</accession>
<name>DER_ECOLI</name>
<dbReference type="EMBL" id="U00096">
    <property type="protein sequence ID" value="AAC75564.2"/>
    <property type="molecule type" value="Genomic_DNA"/>
</dbReference>
<dbReference type="EMBL" id="AP009048">
    <property type="protein sequence ID" value="BAA16397.2"/>
    <property type="molecule type" value="Genomic_DNA"/>
</dbReference>
<dbReference type="PIR" id="F65027">
    <property type="entry name" value="F65027"/>
</dbReference>
<dbReference type="RefSeq" id="NP_417006.2">
    <property type="nucleotide sequence ID" value="NC_000913.3"/>
</dbReference>
<dbReference type="RefSeq" id="WP_000249410.1">
    <property type="nucleotide sequence ID" value="NZ_STEB01000011.1"/>
</dbReference>
<dbReference type="PDB" id="3J8G">
    <property type="method" value="EM"/>
    <property type="resolution" value="5.00 A"/>
    <property type="chains" value="X=1-490"/>
</dbReference>
<dbReference type="PDBsum" id="3J8G"/>
<dbReference type="EMDB" id="EMD-6149"/>
<dbReference type="SMR" id="P0A6P5"/>
<dbReference type="BioGRID" id="4263153">
    <property type="interactions" value="77"/>
</dbReference>
<dbReference type="BioGRID" id="851322">
    <property type="interactions" value="1"/>
</dbReference>
<dbReference type="DIP" id="DIP-48272N"/>
<dbReference type="FunCoup" id="P0A6P5">
    <property type="interactions" value="636"/>
</dbReference>
<dbReference type="IntAct" id="P0A6P5">
    <property type="interactions" value="7"/>
</dbReference>
<dbReference type="STRING" id="511145.b2511"/>
<dbReference type="jPOST" id="P0A6P5"/>
<dbReference type="PaxDb" id="511145-b2511"/>
<dbReference type="EnsemblBacteria" id="AAC75564">
    <property type="protein sequence ID" value="AAC75564"/>
    <property type="gene ID" value="b2511"/>
</dbReference>
<dbReference type="GeneID" id="75206204"/>
<dbReference type="GeneID" id="946983"/>
<dbReference type="KEGG" id="ecj:JW5403"/>
<dbReference type="KEGG" id="eco:b2511"/>
<dbReference type="KEGG" id="ecoc:C3026_13925"/>
<dbReference type="PATRIC" id="fig|1411691.4.peg.4225"/>
<dbReference type="EchoBASE" id="EB3959"/>
<dbReference type="eggNOG" id="COG1160">
    <property type="taxonomic scope" value="Bacteria"/>
</dbReference>
<dbReference type="HOGENOM" id="CLU_016077_6_2_6"/>
<dbReference type="InParanoid" id="P0A6P5"/>
<dbReference type="OMA" id="CNLPQYV"/>
<dbReference type="OrthoDB" id="9805918at2"/>
<dbReference type="PhylomeDB" id="P0A6P5"/>
<dbReference type="BioCyc" id="EcoCyc:G7319-MONOMER"/>
<dbReference type="BioCyc" id="MetaCyc:G7319-MONOMER"/>
<dbReference type="BRENDA" id="3.6.5.2">
    <property type="organism ID" value="2026"/>
</dbReference>
<dbReference type="EvolutionaryTrace" id="P0A6P5"/>
<dbReference type="PRO" id="PR:P0A6P5"/>
<dbReference type="Proteomes" id="UP000000625">
    <property type="component" value="Chromosome"/>
</dbReference>
<dbReference type="GO" id="GO:0005829">
    <property type="term" value="C:cytosol"/>
    <property type="evidence" value="ECO:0000314"/>
    <property type="project" value="EcoCyc"/>
</dbReference>
<dbReference type="GO" id="GO:0005525">
    <property type="term" value="F:GTP binding"/>
    <property type="evidence" value="ECO:0007669"/>
    <property type="project" value="UniProtKB-UniRule"/>
</dbReference>
<dbReference type="GO" id="GO:0032794">
    <property type="term" value="F:GTPase activating protein binding"/>
    <property type="evidence" value="ECO:0000353"/>
    <property type="project" value="EcoCyc"/>
</dbReference>
<dbReference type="GO" id="GO:0003924">
    <property type="term" value="F:GTPase activity"/>
    <property type="evidence" value="ECO:0000314"/>
    <property type="project" value="EcoCyc"/>
</dbReference>
<dbReference type="GO" id="GO:0097216">
    <property type="term" value="F:guanosine tetraphosphate binding"/>
    <property type="evidence" value="ECO:0000314"/>
    <property type="project" value="EcoCyc"/>
</dbReference>
<dbReference type="GO" id="GO:0043023">
    <property type="term" value="F:ribosomal large subunit binding"/>
    <property type="evidence" value="ECO:0000314"/>
    <property type="project" value="EcoCyc"/>
</dbReference>
<dbReference type="GO" id="GO:0043022">
    <property type="term" value="F:ribosome binding"/>
    <property type="evidence" value="ECO:0000314"/>
    <property type="project" value="EcoCyc"/>
</dbReference>
<dbReference type="GO" id="GO:0000027">
    <property type="term" value="P:ribosomal large subunit assembly"/>
    <property type="evidence" value="ECO:0000315"/>
    <property type="project" value="EcoCyc"/>
</dbReference>
<dbReference type="CDD" id="cd01894">
    <property type="entry name" value="EngA1"/>
    <property type="match status" value="1"/>
</dbReference>
<dbReference type="CDD" id="cd01895">
    <property type="entry name" value="EngA2"/>
    <property type="match status" value="1"/>
</dbReference>
<dbReference type="FunFam" id="3.30.300.20:FF:000004">
    <property type="entry name" value="GTPase Der"/>
    <property type="match status" value="1"/>
</dbReference>
<dbReference type="FunFam" id="3.40.50.300:FF:000040">
    <property type="entry name" value="GTPase Der"/>
    <property type="match status" value="1"/>
</dbReference>
<dbReference type="FunFam" id="3.40.50.300:FF:000057">
    <property type="entry name" value="GTPase Der"/>
    <property type="match status" value="1"/>
</dbReference>
<dbReference type="Gene3D" id="3.30.300.20">
    <property type="match status" value="1"/>
</dbReference>
<dbReference type="Gene3D" id="3.40.50.300">
    <property type="entry name" value="P-loop containing nucleotide triphosphate hydrolases"/>
    <property type="match status" value="2"/>
</dbReference>
<dbReference type="HAMAP" id="MF_00195">
    <property type="entry name" value="GTPase_Der"/>
    <property type="match status" value="1"/>
</dbReference>
<dbReference type="InterPro" id="IPR031166">
    <property type="entry name" value="G_ENGA"/>
</dbReference>
<dbReference type="InterPro" id="IPR006073">
    <property type="entry name" value="GTP-bd"/>
</dbReference>
<dbReference type="InterPro" id="IPR016484">
    <property type="entry name" value="GTPase_Der"/>
</dbReference>
<dbReference type="InterPro" id="IPR032859">
    <property type="entry name" value="KH_dom-like"/>
</dbReference>
<dbReference type="InterPro" id="IPR015946">
    <property type="entry name" value="KH_dom-like_a/b"/>
</dbReference>
<dbReference type="InterPro" id="IPR027417">
    <property type="entry name" value="P-loop_NTPase"/>
</dbReference>
<dbReference type="InterPro" id="IPR005225">
    <property type="entry name" value="Small_GTP-bd"/>
</dbReference>
<dbReference type="NCBIfam" id="TIGR03594">
    <property type="entry name" value="GTPase_EngA"/>
    <property type="match status" value="1"/>
</dbReference>
<dbReference type="NCBIfam" id="TIGR00231">
    <property type="entry name" value="small_GTP"/>
    <property type="match status" value="2"/>
</dbReference>
<dbReference type="PANTHER" id="PTHR43834">
    <property type="entry name" value="GTPASE DER"/>
    <property type="match status" value="1"/>
</dbReference>
<dbReference type="PANTHER" id="PTHR43834:SF6">
    <property type="entry name" value="GTPASE DER"/>
    <property type="match status" value="1"/>
</dbReference>
<dbReference type="Pfam" id="PF14714">
    <property type="entry name" value="KH_dom-like"/>
    <property type="match status" value="1"/>
</dbReference>
<dbReference type="Pfam" id="PF01926">
    <property type="entry name" value="MMR_HSR1"/>
    <property type="match status" value="2"/>
</dbReference>
<dbReference type="PIRSF" id="PIRSF006485">
    <property type="entry name" value="GTP-binding_EngA"/>
    <property type="match status" value="1"/>
</dbReference>
<dbReference type="PRINTS" id="PR00326">
    <property type="entry name" value="GTP1OBG"/>
</dbReference>
<dbReference type="SUPFAM" id="SSF52540">
    <property type="entry name" value="P-loop containing nucleoside triphosphate hydrolases"/>
    <property type="match status" value="2"/>
</dbReference>
<dbReference type="PROSITE" id="PS51712">
    <property type="entry name" value="G_ENGA"/>
    <property type="match status" value="2"/>
</dbReference>
<gene>
    <name type="primary">der</name>
    <name type="synonym">engA</name>
    <name type="synonym">yfgK</name>
    <name type="ordered locus">b2511</name>
    <name type="ordered locus">JW5403</name>
</gene>
<comment type="function">
    <text evidence="3 4">GTPase that plays an essential role in the late steps of ribosome biogenesis. GTPase point mutations (but not a deletion mutant) are suppressed by mild overexpression of RelA, probably due to increased levels of the stringent response mediator (p)ppGpp. 50S subunits assembled in the absence of Der are defective and unable to assemble into 70S ribosomes. GTPase activity is stimulated by YihI. Overexpression rescues an rrmJ deletion, stabilizing the 70S ribosome. Der and RrmJ are likely to share a mechanism to stabilize 50S ribosomal subunits at a very late stage of 50S subunit maturation possibly by interacting with 23S rRNA or 23S rRNA/r-protein complex.</text>
</comment>
<comment type="biophysicochemical properties">
    <kinetics>
        <KM evidence="4 7">125 uM for GTP (to 143 uM) in the absence of YihI</KM>
        <KM evidence="4 7">59.2 uM for GTP in the presence of full-length YihI</KM>
        <KM evidence="4 7">50.1 uM for GTP in the presence of N-terminally truncated YihI</KM>
        <text>Vmax increases 35% in the presence of full-length YihI and 90% in the presence of YihI missing the first 45 residues.</text>
    </kinetics>
</comment>
<comment type="subunit">
    <text evidence="4 5 7">Associates with the 50S ribosomal subunit in the presence of GMPPNP, a non-hydrolysable GTP analog, and thus probably also in the presence of GTP, but not in the presence of GDP or in the absence of nucleotide. Interacts with YihI via the last 490 residues.</text>
</comment>
<comment type="domain">
    <text evidence="6">The 2 G (guanine nucleotide-binding) domains are essential for activity and function cooperatively. The KH-like domain is required for ribosome recognition.</text>
</comment>
<comment type="disruption phenotype">
    <text evidence="2 4 5">Lethality. In a depletion experiment cells grow normally for 4 hours, at which time there is no detectable protein left. After 4 hours cell growth decreases rapidly, the amount of 50S ribosomal subunit decreases, rRNA precursors accumulate. A 40S ribosomal subunit is detected which is missing proteins L9 and L18 and has slightly reduced amounts of L2 and L6 compared to wild-type ribosomes.</text>
</comment>
<comment type="similarity">
    <text evidence="8">Belongs to the TRAFAC class TrmE-Era-EngA-EngB-Septin-like GTPase superfamily. EngA (Der) GTPase family.</text>
</comment>
<proteinExistence type="evidence at protein level"/>
<evidence type="ECO:0000255" key="1"/>
<evidence type="ECO:0000269" key="2">
    <source>
    </source>
</evidence>
<evidence type="ECO:0000269" key="3">
    <source>
    </source>
</evidence>
<evidence type="ECO:0000269" key="4">
    <source>
    </source>
</evidence>
<evidence type="ECO:0000269" key="5">
    <source>
    </source>
</evidence>
<evidence type="ECO:0000269" key="6">
    <source>
    </source>
</evidence>
<evidence type="ECO:0000269" key="7">
    <source>
    </source>
</evidence>
<evidence type="ECO:0000305" key="8"/>
<reference key="1">
    <citation type="journal article" date="1997" name="DNA Res.">
        <title>Construction of a contiguous 874-kb sequence of the Escherichia coli-K12 genome corresponding to 50.0-68.8 min on the linkage map and analysis of its sequence features.</title>
        <authorList>
            <person name="Yamamoto Y."/>
            <person name="Aiba H."/>
            <person name="Baba T."/>
            <person name="Hayashi K."/>
            <person name="Inada T."/>
            <person name="Isono K."/>
            <person name="Itoh T."/>
            <person name="Kimura S."/>
            <person name="Kitagawa M."/>
            <person name="Makino K."/>
            <person name="Miki T."/>
            <person name="Mitsuhashi N."/>
            <person name="Mizobuchi K."/>
            <person name="Mori H."/>
            <person name="Nakade S."/>
            <person name="Nakamura Y."/>
            <person name="Nashimoto H."/>
            <person name="Oshima T."/>
            <person name="Oyama S."/>
            <person name="Saito N."/>
            <person name="Sampei G."/>
            <person name="Satoh Y."/>
            <person name="Sivasundaram S."/>
            <person name="Tagami H."/>
            <person name="Takahashi H."/>
            <person name="Takeda J."/>
            <person name="Takemoto K."/>
            <person name="Uehara K."/>
            <person name="Wada C."/>
            <person name="Yamagata S."/>
            <person name="Horiuchi T."/>
        </authorList>
    </citation>
    <scope>NUCLEOTIDE SEQUENCE [LARGE SCALE GENOMIC DNA]</scope>
    <source>
        <strain>K12 / W3110 / ATCC 27325 / DSM 5911</strain>
    </source>
</reference>
<reference key="2">
    <citation type="journal article" date="1997" name="Science">
        <title>The complete genome sequence of Escherichia coli K-12.</title>
        <authorList>
            <person name="Blattner F.R."/>
            <person name="Plunkett G. III"/>
            <person name="Bloch C.A."/>
            <person name="Perna N.T."/>
            <person name="Burland V."/>
            <person name="Riley M."/>
            <person name="Collado-Vides J."/>
            <person name="Glasner J.D."/>
            <person name="Rode C.K."/>
            <person name="Mayhew G.F."/>
            <person name="Gregor J."/>
            <person name="Davis N.W."/>
            <person name="Kirkpatrick H.A."/>
            <person name="Goeden M.A."/>
            <person name="Rose D.J."/>
            <person name="Mau B."/>
            <person name="Shao Y."/>
        </authorList>
    </citation>
    <scope>NUCLEOTIDE SEQUENCE [LARGE SCALE GENOMIC DNA]</scope>
    <source>
        <strain>K12 / MG1655 / ATCC 47076</strain>
    </source>
</reference>
<reference key="3">
    <citation type="journal article" date="2006" name="Mol. Syst. Biol.">
        <title>Highly accurate genome sequences of Escherichia coli K-12 strains MG1655 and W3110.</title>
        <authorList>
            <person name="Hayashi K."/>
            <person name="Morooka N."/>
            <person name="Yamamoto Y."/>
            <person name="Fujita K."/>
            <person name="Isono K."/>
            <person name="Choi S."/>
            <person name="Ohtsubo E."/>
            <person name="Baba T."/>
            <person name="Wanner B.L."/>
            <person name="Mori H."/>
            <person name="Horiuchi T."/>
        </authorList>
    </citation>
    <scope>NUCLEOTIDE SEQUENCE [LARGE SCALE GENOMIC DNA]</scope>
    <source>
        <strain>K12 / W3110 / ATCC 27325 / DSM 5911</strain>
    </source>
</reference>
<reference key="4">
    <citation type="journal article" date="2001" name="J. Biol. Chem.">
        <title>An essential GTPase, der, containing double GTP-binding domains from Escherichia coli and Thermotoga maritima.</title>
        <authorList>
            <person name="Hwang J."/>
            <person name="Inouye M."/>
        </authorList>
    </citation>
    <scope>DISRUPTION PHENOTYPE</scope>
</reference>
<reference key="5">
    <citation type="journal article" date="2002" name="J. Bacteriol.">
        <title>Overexpression of two different GTPases rescues a null mutation in a heat-induced rRNA methyltransferase.</title>
        <authorList>
            <person name="Tan J."/>
            <person name="Jakob U."/>
            <person name="Bardwell J.C.A."/>
        </authorList>
    </citation>
    <scope>FUNCTION</scope>
    <source>
        <strain>K12 / MG1655 / ATCC 47076</strain>
    </source>
</reference>
<reference key="6">
    <citation type="journal article" date="2006" name="J. Bacteriol.">
        <title>Cooperative and critical roles for both G domains in the GTPase activity and cellular function of ribosome-associated Escherichia coli EngA.</title>
        <authorList>
            <person name="Bharat A."/>
            <person name="Jiang M."/>
            <person name="Sullivan S.M."/>
            <person name="Maddock J.R."/>
            <person name="Brown E.D."/>
        </authorList>
    </citation>
    <scope>INTERACTION WITH 50S RIBOSOMAL SUBUNIT</scope>
    <scope>MUTAGENESIS OF LYS-15; SER-16; LYS-215 AND SER-216</scope>
    <scope>DISRUPTION PHENOTYPE</scope>
    <source>
        <strain>K12 / EB1208</strain>
    </source>
</reference>
<reference key="7">
    <citation type="journal article" date="2006" name="Mol. Microbiol.">
        <title>The tandem GTPase, Der, is essential for the biogenesis of 50S ribosomal subunits in Escherichia coli.</title>
        <authorList>
            <person name="Hwang J."/>
            <person name="Inouye M."/>
        </authorList>
    </citation>
    <scope>FUNCTION IN 50S RIBOSOMAL SUBUNIT BIOGENESIS</scope>
    <scope>BIOPHYSICOCHEMICAL PROPERTIES</scope>
    <scope>INTERACTION WITH 50S RIBOSOMAL SUBUNIT</scope>
    <scope>MUTAGENESIS OF ASN-118 AND ASN-321</scope>
    <scope>DISRUPTION PHENOTYPE</scope>
    <source>
        <strain>K12 / BW25113</strain>
    </source>
</reference>
<reference key="8">
    <citation type="journal article" date="2008" name="J. Bacteriol.">
        <title>RelA functionally suppresses the growth defect caused by a mutation in the G domain of the essential Der protein.</title>
        <authorList>
            <person name="Hwang J."/>
            <person name="Inouye M."/>
        </authorList>
    </citation>
    <scope>SUPPRESSION BY RELA AND (P)PPGPP</scope>
    <source>
        <strain>K12 / BW25113</strain>
    </source>
</reference>
<reference key="9">
    <citation type="journal article" date="2010" name="J. Bacteriol.">
        <title>Interaction of an essential Escherichia coli GTPase, Der, with the 50S ribosome via the KH-like domain.</title>
        <authorList>
            <person name="Hwang J."/>
            <person name="Inouye M."/>
        </authorList>
    </citation>
    <scope>DOMAIN KH-LIKE</scope>
    <scope>MUTAGENESIS OF GLY-414; GLY-424; ASN-469 AND THR-472</scope>
</reference>
<reference key="10">
    <citation type="journal article" date="2010" name="J. Mol. Biol.">
        <title>A bacterial GAP-like protein, YihI, regulating the GTPase of Der, an essential GTP-binding protein in Escherichia coli.</title>
        <authorList>
            <person name="Hwang J."/>
            <person name="Inouye M."/>
        </authorList>
    </citation>
    <scope>STIMULATION OF GTPASE BY YIHI</scope>
    <scope>BIOPHYSICOCHEMICAL PROPERTIES</scope>
    <scope>INTERACTION WITH YIHI</scope>
    <scope>MUTAGENESIS OF SER-16 AND SER-216</scope>
</reference>
<protein>
    <recommendedName>
        <fullName>GTPase Der</fullName>
    </recommendedName>
    <alternativeName>
        <fullName>Double era-like domain protein</fullName>
    </alternativeName>
    <alternativeName>
        <fullName>GTP-binding protein EngA</fullName>
    </alternativeName>
</protein>
<feature type="chain" id="PRO_0000178991" description="GTPase Der">
    <location>
        <begin position="1"/>
        <end position="490"/>
    </location>
</feature>
<feature type="domain" description="EngA-type G 1">
    <location>
        <begin position="3"/>
        <end position="166"/>
    </location>
</feature>
<feature type="domain" description="EngA-type G 2">
    <location>
        <begin position="203"/>
        <end position="376"/>
    </location>
</feature>
<feature type="domain" description="KH-like">
    <location>
        <begin position="377"/>
        <end position="461"/>
    </location>
</feature>
<feature type="binding site" evidence="1">
    <location>
        <begin position="9"/>
        <end position="16"/>
    </location>
    <ligand>
        <name>GTP</name>
        <dbReference type="ChEBI" id="CHEBI:37565"/>
        <label>1</label>
    </ligand>
</feature>
<feature type="binding site" evidence="1">
    <location>
        <begin position="56"/>
        <end position="60"/>
    </location>
    <ligand>
        <name>GTP</name>
        <dbReference type="ChEBI" id="CHEBI:37565"/>
        <label>1</label>
    </ligand>
</feature>
<feature type="binding site" evidence="1">
    <location>
        <begin position="118"/>
        <end position="121"/>
    </location>
    <ligand>
        <name>GTP</name>
        <dbReference type="ChEBI" id="CHEBI:37565"/>
        <label>1</label>
    </ligand>
</feature>
<feature type="binding site" evidence="1">
    <location>
        <begin position="209"/>
        <end position="216"/>
    </location>
    <ligand>
        <name>GTP</name>
        <dbReference type="ChEBI" id="CHEBI:37565"/>
        <label>2</label>
    </ligand>
</feature>
<feature type="binding site" evidence="1">
    <location>
        <begin position="256"/>
        <end position="260"/>
    </location>
    <ligand>
        <name>GTP</name>
        <dbReference type="ChEBI" id="CHEBI:37565"/>
        <label>2</label>
    </ligand>
</feature>
<feature type="binding site" evidence="1">
    <location>
        <begin position="321"/>
        <end position="324"/>
    </location>
    <ligand>
        <name>GTP</name>
        <dbReference type="ChEBI" id="CHEBI:37565"/>
        <label>2</label>
    </ligand>
</feature>
<feature type="mutagenesis site" description="Complements a disruption mutant, KM for GTP 695 uM." evidence="5">
    <original>K</original>
    <variation>A</variation>
    <location>
        <position position="15"/>
    </location>
</feature>
<feature type="mutagenesis site" description="Does not complement a disruption mutant, KM for GTP 4.9 mM. Decreased GTPase activity, no stimulation by YihI." evidence="5 7">
    <original>S</original>
    <variation>A</variation>
    <location>
        <position position="16"/>
    </location>
</feature>
<feature type="mutagenesis site" description="Complements a disruption mutant at 42 degrees Celsius, very poor complementation at 30 degrees Celsius. Reduces affinity for the 50S ribosomal subunit at 30 degrees Celsius. RelA suppresses this point mutation at 30 degrees Celsius." evidence="4">
    <original>N</original>
    <variation>D</variation>
    <location>
        <position position="118"/>
    </location>
</feature>
<feature type="mutagenesis site" description="Does not complement a disruption mutant at 42 degrees Celsius, diminished association with 50S ribosomal subunits; when associated with D-321." evidence="4">
    <original>N</original>
    <variation>D</variation>
    <location>
        <position position="118"/>
    </location>
</feature>
<feature type="mutagenesis site" description="Does not complement a disruption mutant, KM for GTP 6.7 mM." evidence="5">
    <original>K</original>
    <variation>A</variation>
    <location>
        <position position="215"/>
    </location>
</feature>
<feature type="mutagenesis site" description="Does not complement a disruption mutant, considerably decreased GTPase activity, KM for GTP 4.8 mM, no stimulation by YihI." evidence="5 7">
    <original>S</original>
    <variation>A</variation>
    <location>
        <position position="216"/>
    </location>
</feature>
<feature type="mutagenesis site" description="Complements a disruption mutant at 42 degrees Celsius, no complementation at 30 degrees Celsius. Greatly reduces affinity for the 50S ribosomal subunit at 30 degrees Celsius. RelA suppresses this point mutation at 30 degrees Celsius." evidence="4">
    <original>N</original>
    <variation>D</variation>
    <location>
        <position position="321"/>
    </location>
</feature>
<feature type="mutagenesis site" description="Does not complement rrmJ deletion, complements der disruption at 42 degrees Celsius." evidence="6">
    <original>G</original>
    <variation>R</variation>
    <location>
        <position position="414"/>
    </location>
</feature>
<feature type="mutagenesis site" description="Does not complement rrmJ deletion, nor the der disruption at 42 degrees Celsius." evidence="6">
    <original>G</original>
    <variation>D</variation>
    <location>
        <position position="424"/>
    </location>
</feature>
<feature type="mutagenesis site" description="Does not complement rrmJ deletion, complements der disruption at 42 degrees Celsius." evidence="6">
    <original>N</original>
    <variation>K</variation>
    <location>
        <position position="469"/>
    </location>
</feature>
<feature type="mutagenesis site" description="Does not complement rrmJ deletion, complements der disruption at 42 degrees Celsius." evidence="6">
    <original>T</original>
    <variation>A</variation>
    <location>
        <position position="472"/>
    </location>
</feature>
<sequence>MVPVVALVGRPNVGKSTLFNRLTRTRDALVADFPGLTRDRKYGRAEIEGREFICIDTGGIDGTEDGVETRMAEQSLLAIEEADVVLFMVDARAGLMPADEAIAKHLRSREKPTFLVANKTDGLDPDQAVVDFYSLGLGEIYPIAASHGRGVLSLLEHVLLPWMEDLAPQEEVDEDAEYWAQFEAEENGEEEEEDDFDPQSLPIKLAIVGRPNVGKSTLTNRILGEERVVVYDMPGTTRDSIYIPMERDGREYVLIDTAGVRKRGKITDAVEKFSVIKTLQAIEDANVVMLVIDAREGISDQDLSLLGFILNSGRSLVIVVNKWDGLSQEVKEQVKETLDFRLGFIDFARVHFISALHGSGVGNLFESVREAYDSSTRRVGTSMLTRIMTMAVEDHQPPLVRGRRVKLKYAHAGGYNPPIVVIHGNQVKDLPDSYKRYLMNYFRKSLDVMGSPIRIQFKEGENPYANKRNTLTPTQMRKRKRLMKHIKKNK</sequence>
<keyword id="KW-0002">3D-structure</keyword>
<keyword id="KW-0342">GTP-binding</keyword>
<keyword id="KW-0547">Nucleotide-binding</keyword>
<keyword id="KW-1185">Reference proteome</keyword>
<keyword id="KW-0677">Repeat</keyword>
<keyword id="KW-0690">Ribosome biogenesis</keyword>